<accession>Q89U82</accession>
<feature type="chain" id="PRO_0000183080" description="Crossover junction endodeoxyribonuclease RuvC">
    <location>
        <begin position="1"/>
        <end position="175"/>
    </location>
</feature>
<feature type="active site" evidence="1">
    <location>
        <position position="16"/>
    </location>
</feature>
<feature type="active site" evidence="1">
    <location>
        <position position="76"/>
    </location>
</feature>
<feature type="active site" evidence="1">
    <location>
        <position position="148"/>
    </location>
</feature>
<feature type="binding site" evidence="1">
    <location>
        <position position="16"/>
    </location>
    <ligand>
        <name>Mg(2+)</name>
        <dbReference type="ChEBI" id="CHEBI:18420"/>
        <label>1</label>
    </ligand>
</feature>
<feature type="binding site" evidence="1">
    <location>
        <position position="76"/>
    </location>
    <ligand>
        <name>Mg(2+)</name>
        <dbReference type="ChEBI" id="CHEBI:18420"/>
        <label>2</label>
    </ligand>
</feature>
<feature type="binding site" evidence="1">
    <location>
        <position position="148"/>
    </location>
    <ligand>
        <name>Mg(2+)</name>
        <dbReference type="ChEBI" id="CHEBI:18420"/>
        <label>1</label>
    </ligand>
</feature>
<sequence length="175" mass="18417">MTALPIRGPVRIIGIDPGLRRTGWGVIEAEGNRLIYVACGSVEPPDDLPLSSRLLAIHEGLASVLSDHKPMEAAVEQTFVNKDGVATLKLGQARGVAMLAPAMFGISVAEYAPNQVKKTVVGAGHADKQQIAMMLKILLPKAEPPSADAADALAIAITHAHHRQSTALRLKVVGV</sequence>
<reference key="1">
    <citation type="journal article" date="2002" name="DNA Res.">
        <title>Complete genomic sequence of nitrogen-fixing symbiotic bacterium Bradyrhizobium japonicum USDA110.</title>
        <authorList>
            <person name="Kaneko T."/>
            <person name="Nakamura Y."/>
            <person name="Sato S."/>
            <person name="Minamisawa K."/>
            <person name="Uchiumi T."/>
            <person name="Sasamoto S."/>
            <person name="Watanabe A."/>
            <person name="Idesawa K."/>
            <person name="Iriguchi M."/>
            <person name="Kawashima K."/>
            <person name="Kohara M."/>
            <person name="Matsumoto M."/>
            <person name="Shimpo S."/>
            <person name="Tsuruoka H."/>
            <person name="Wada T."/>
            <person name="Yamada M."/>
            <person name="Tabata S."/>
        </authorList>
    </citation>
    <scope>NUCLEOTIDE SEQUENCE [LARGE SCALE GENOMIC DNA]</scope>
    <source>
        <strain>JCM 10833 / BCRC 13528 / IAM 13628 / NBRC 14792 / USDA 110</strain>
    </source>
</reference>
<dbReference type="EC" id="3.1.21.10" evidence="1"/>
<dbReference type="EMBL" id="BA000040">
    <property type="protein sequence ID" value="BAC46800.1"/>
    <property type="molecule type" value="Genomic_DNA"/>
</dbReference>
<dbReference type="RefSeq" id="NP_768175.1">
    <property type="nucleotide sequence ID" value="NC_004463.1"/>
</dbReference>
<dbReference type="RefSeq" id="WP_011084351.1">
    <property type="nucleotide sequence ID" value="NC_004463.1"/>
</dbReference>
<dbReference type="SMR" id="Q89U82"/>
<dbReference type="FunCoup" id="Q89U82">
    <property type="interactions" value="295"/>
</dbReference>
<dbReference type="STRING" id="224911.AAV28_04615"/>
<dbReference type="EnsemblBacteria" id="BAC46800">
    <property type="protein sequence ID" value="BAC46800"/>
    <property type="gene ID" value="BAC46800"/>
</dbReference>
<dbReference type="GeneID" id="46488809"/>
<dbReference type="KEGG" id="bja:blr1535"/>
<dbReference type="PATRIC" id="fig|224911.44.peg.970"/>
<dbReference type="eggNOG" id="COG0817">
    <property type="taxonomic scope" value="Bacteria"/>
</dbReference>
<dbReference type="HOGENOM" id="CLU_091257_1_0_5"/>
<dbReference type="InParanoid" id="Q89U82"/>
<dbReference type="OrthoDB" id="9805499at2"/>
<dbReference type="PhylomeDB" id="Q89U82"/>
<dbReference type="Proteomes" id="UP000002526">
    <property type="component" value="Chromosome"/>
</dbReference>
<dbReference type="GO" id="GO:0005737">
    <property type="term" value="C:cytoplasm"/>
    <property type="evidence" value="ECO:0007669"/>
    <property type="project" value="UniProtKB-SubCell"/>
</dbReference>
<dbReference type="GO" id="GO:0048476">
    <property type="term" value="C:Holliday junction resolvase complex"/>
    <property type="evidence" value="ECO:0007669"/>
    <property type="project" value="UniProtKB-UniRule"/>
</dbReference>
<dbReference type="GO" id="GO:0008821">
    <property type="term" value="F:crossover junction DNA endonuclease activity"/>
    <property type="evidence" value="ECO:0007669"/>
    <property type="project" value="UniProtKB-UniRule"/>
</dbReference>
<dbReference type="GO" id="GO:0003677">
    <property type="term" value="F:DNA binding"/>
    <property type="evidence" value="ECO:0007669"/>
    <property type="project" value="UniProtKB-KW"/>
</dbReference>
<dbReference type="GO" id="GO:0000287">
    <property type="term" value="F:magnesium ion binding"/>
    <property type="evidence" value="ECO:0007669"/>
    <property type="project" value="UniProtKB-UniRule"/>
</dbReference>
<dbReference type="GO" id="GO:0006310">
    <property type="term" value="P:DNA recombination"/>
    <property type="evidence" value="ECO:0007669"/>
    <property type="project" value="UniProtKB-UniRule"/>
</dbReference>
<dbReference type="GO" id="GO:0006281">
    <property type="term" value="P:DNA repair"/>
    <property type="evidence" value="ECO:0007669"/>
    <property type="project" value="UniProtKB-UniRule"/>
</dbReference>
<dbReference type="CDD" id="cd16962">
    <property type="entry name" value="RuvC"/>
    <property type="match status" value="1"/>
</dbReference>
<dbReference type="FunFam" id="3.30.420.10:FF:000002">
    <property type="entry name" value="Crossover junction endodeoxyribonuclease RuvC"/>
    <property type="match status" value="1"/>
</dbReference>
<dbReference type="Gene3D" id="3.30.420.10">
    <property type="entry name" value="Ribonuclease H-like superfamily/Ribonuclease H"/>
    <property type="match status" value="1"/>
</dbReference>
<dbReference type="HAMAP" id="MF_00034">
    <property type="entry name" value="RuvC"/>
    <property type="match status" value="1"/>
</dbReference>
<dbReference type="InterPro" id="IPR012337">
    <property type="entry name" value="RNaseH-like_sf"/>
</dbReference>
<dbReference type="InterPro" id="IPR036397">
    <property type="entry name" value="RNaseH_sf"/>
</dbReference>
<dbReference type="InterPro" id="IPR020563">
    <property type="entry name" value="X-over_junc_endoDNase_Mg_BS"/>
</dbReference>
<dbReference type="InterPro" id="IPR002176">
    <property type="entry name" value="X-over_junc_endoDNase_RuvC"/>
</dbReference>
<dbReference type="NCBIfam" id="TIGR00228">
    <property type="entry name" value="ruvC"/>
    <property type="match status" value="1"/>
</dbReference>
<dbReference type="PANTHER" id="PTHR30194">
    <property type="entry name" value="CROSSOVER JUNCTION ENDODEOXYRIBONUCLEASE RUVC"/>
    <property type="match status" value="1"/>
</dbReference>
<dbReference type="PANTHER" id="PTHR30194:SF3">
    <property type="entry name" value="CROSSOVER JUNCTION ENDODEOXYRIBONUCLEASE RUVC"/>
    <property type="match status" value="1"/>
</dbReference>
<dbReference type="Pfam" id="PF02075">
    <property type="entry name" value="RuvC"/>
    <property type="match status" value="1"/>
</dbReference>
<dbReference type="PRINTS" id="PR00696">
    <property type="entry name" value="RSOLVASERUVC"/>
</dbReference>
<dbReference type="SUPFAM" id="SSF53098">
    <property type="entry name" value="Ribonuclease H-like"/>
    <property type="match status" value="1"/>
</dbReference>
<dbReference type="PROSITE" id="PS01321">
    <property type="entry name" value="RUVC"/>
    <property type="match status" value="1"/>
</dbReference>
<name>RUVC_BRADU</name>
<keyword id="KW-0963">Cytoplasm</keyword>
<keyword id="KW-0227">DNA damage</keyword>
<keyword id="KW-0233">DNA recombination</keyword>
<keyword id="KW-0234">DNA repair</keyword>
<keyword id="KW-0238">DNA-binding</keyword>
<keyword id="KW-0255">Endonuclease</keyword>
<keyword id="KW-0378">Hydrolase</keyword>
<keyword id="KW-0460">Magnesium</keyword>
<keyword id="KW-0479">Metal-binding</keyword>
<keyword id="KW-0540">Nuclease</keyword>
<keyword id="KW-1185">Reference proteome</keyword>
<gene>
    <name evidence="1" type="primary">ruvC</name>
    <name type="ordered locus">blr1535</name>
</gene>
<protein>
    <recommendedName>
        <fullName evidence="1">Crossover junction endodeoxyribonuclease RuvC</fullName>
        <ecNumber evidence="1">3.1.21.10</ecNumber>
    </recommendedName>
    <alternativeName>
        <fullName evidence="1">Holliday junction nuclease RuvC</fullName>
    </alternativeName>
    <alternativeName>
        <fullName evidence="1">Holliday junction resolvase RuvC</fullName>
    </alternativeName>
</protein>
<organism>
    <name type="scientific">Bradyrhizobium diazoefficiens (strain JCM 10833 / BCRC 13528 / IAM 13628 / NBRC 14792 / USDA 110)</name>
    <dbReference type="NCBI Taxonomy" id="224911"/>
    <lineage>
        <taxon>Bacteria</taxon>
        <taxon>Pseudomonadati</taxon>
        <taxon>Pseudomonadota</taxon>
        <taxon>Alphaproteobacteria</taxon>
        <taxon>Hyphomicrobiales</taxon>
        <taxon>Nitrobacteraceae</taxon>
        <taxon>Bradyrhizobium</taxon>
    </lineage>
</organism>
<evidence type="ECO:0000255" key="1">
    <source>
        <dbReference type="HAMAP-Rule" id="MF_00034"/>
    </source>
</evidence>
<proteinExistence type="inferred from homology"/>
<comment type="function">
    <text evidence="1">The RuvA-RuvB-RuvC complex processes Holliday junction (HJ) DNA during genetic recombination and DNA repair. Endonuclease that resolves HJ intermediates. Cleaves cruciform DNA by making single-stranded nicks across the HJ at symmetrical positions within the homologous arms, yielding a 5'-phosphate and a 3'-hydroxyl group; requires a central core of homology in the junction. The consensus cleavage sequence is 5'-(A/T)TT(C/G)-3'. Cleavage occurs on the 3'-side of the TT dinucleotide at the point of strand exchange. HJ branch migration catalyzed by RuvA-RuvB allows RuvC to scan DNA until it finds its consensus sequence, where it cleaves and resolves the cruciform DNA.</text>
</comment>
<comment type="catalytic activity">
    <reaction evidence="1">
        <text>Endonucleolytic cleavage at a junction such as a reciprocal single-stranded crossover between two homologous DNA duplexes (Holliday junction).</text>
        <dbReference type="EC" id="3.1.21.10"/>
    </reaction>
</comment>
<comment type="cofactor">
    <cofactor evidence="1">
        <name>Mg(2+)</name>
        <dbReference type="ChEBI" id="CHEBI:18420"/>
    </cofactor>
    <text evidence="1">Binds 2 Mg(2+) ion per subunit.</text>
</comment>
<comment type="subunit">
    <text evidence="1">Homodimer which binds Holliday junction (HJ) DNA. The HJ becomes 2-fold symmetrical on binding to RuvC with unstacked arms; it has a different conformation from HJ DNA in complex with RuvA. In the full resolvosome a probable DNA-RuvA(4)-RuvB(12)-RuvC(2) complex forms which resolves the HJ.</text>
</comment>
<comment type="subcellular location">
    <subcellularLocation>
        <location evidence="1">Cytoplasm</location>
    </subcellularLocation>
</comment>
<comment type="similarity">
    <text evidence="1">Belongs to the RuvC family.</text>
</comment>